<feature type="initiator methionine" description="Removed" evidence="1">
    <location>
        <position position="1"/>
    </location>
</feature>
<feature type="chain" id="PRO_0000221303" description="Histone H3.3">
    <location>
        <begin position="2"/>
        <end position="136"/>
    </location>
</feature>
<feature type="region of interest" description="Disordered" evidence="2">
    <location>
        <begin position="1"/>
        <end position="43"/>
    </location>
</feature>
<feature type="modified residue" description="N6,N6,N6-trimethyllysine; alternate" evidence="1">
    <location>
        <position position="5"/>
    </location>
</feature>
<feature type="modified residue" description="N6,N6-dimethyllysine; alternate" evidence="1">
    <location>
        <position position="5"/>
    </location>
</feature>
<feature type="modified residue" description="N6-methyllysine; alternate" evidence="1">
    <location>
        <position position="5"/>
    </location>
</feature>
<feature type="modified residue" description="N6,N6-dimethyllysine; alternate" evidence="1">
    <location>
        <position position="10"/>
    </location>
</feature>
<feature type="modified residue" description="N6-acetyllysine; alternate" evidence="1">
    <location>
        <position position="10"/>
    </location>
</feature>
<feature type="modified residue" description="N6-methyllysine; alternate" evidence="1">
    <location>
        <position position="10"/>
    </location>
</feature>
<feature type="modified residue" description="Phosphoserine" evidence="1">
    <location>
        <position position="11"/>
    </location>
</feature>
<feature type="modified residue" description="N6,N6-dimethyllysine; alternate" evidence="1">
    <location>
        <position position="15"/>
    </location>
</feature>
<feature type="modified residue" description="N6-acetyllysine; alternate" evidence="1">
    <location>
        <position position="15"/>
    </location>
</feature>
<feature type="modified residue" description="N6-methyllysine; alternate" evidence="1">
    <location>
        <position position="15"/>
    </location>
</feature>
<feature type="modified residue" description="N6-acetyllysine" evidence="1">
    <location>
        <position position="19"/>
    </location>
</feature>
<feature type="modified residue" description="N6-acetyllysine" evidence="1">
    <location>
        <position position="24"/>
    </location>
</feature>
<feature type="modified residue" description="N6,N6,N6-trimethyllysine; alternate" evidence="1">
    <location>
        <position position="28"/>
    </location>
</feature>
<feature type="modified residue" description="N6,N6-dimethyllysine; alternate" evidence="1">
    <location>
        <position position="28"/>
    </location>
</feature>
<feature type="modified residue" description="N6-methyllysine; alternate" evidence="1">
    <location>
        <position position="28"/>
    </location>
</feature>
<feature type="modified residue" description="N6,N6-dimethyllysine; alternate" evidence="1">
    <location>
        <position position="37"/>
    </location>
</feature>
<feature type="modified residue" description="N6-methyllysine; alternate" evidence="1">
    <location>
        <position position="37"/>
    </location>
</feature>
<feature type="modified residue" description="N6,N6-dimethyllysine; alternate" evidence="1">
    <location>
        <position position="38"/>
    </location>
</feature>
<feature type="modified residue" description="N6-methyllysine; alternate" evidence="1">
    <location>
        <position position="38"/>
    </location>
</feature>
<feature type="modified residue" description="N6,N6-dimethyllysine; alternate" evidence="1">
    <location>
        <position position="80"/>
    </location>
</feature>
<feature type="modified residue" description="N6-methyllysine; alternate" evidence="1">
    <location>
        <position position="80"/>
    </location>
</feature>
<keyword id="KW-0007">Acetylation</keyword>
<keyword id="KW-0158">Chromosome</keyword>
<keyword id="KW-0238">DNA-binding</keyword>
<keyword id="KW-0488">Methylation</keyword>
<keyword id="KW-0544">Nucleosome core</keyword>
<keyword id="KW-0539">Nucleus</keyword>
<keyword id="KW-0597">Phosphoprotein</keyword>
<organism>
    <name type="scientific">Drosophila hydei</name>
    <name type="common">Fruit fly</name>
    <dbReference type="NCBI Taxonomy" id="7224"/>
    <lineage>
        <taxon>Eukaryota</taxon>
        <taxon>Metazoa</taxon>
        <taxon>Ecdysozoa</taxon>
        <taxon>Arthropoda</taxon>
        <taxon>Hexapoda</taxon>
        <taxon>Insecta</taxon>
        <taxon>Pterygota</taxon>
        <taxon>Neoptera</taxon>
        <taxon>Endopterygota</taxon>
        <taxon>Diptera</taxon>
        <taxon>Brachycera</taxon>
        <taxon>Muscomorpha</taxon>
        <taxon>Ephydroidea</taxon>
        <taxon>Drosophilidae</taxon>
        <taxon>Drosophila</taxon>
    </lineage>
</organism>
<reference key="1">
    <citation type="journal article" date="1995" name="Genome">
        <title>Structure and expression of histone H3.3 genes in Drosophila melanogaster and Drosophila hydei.</title>
        <authorList>
            <person name="Akhmanova A.S."/>
            <person name="Bindels P.S.T."/>
            <person name="Xu J."/>
            <person name="Miedema K."/>
            <person name="Kremer H."/>
            <person name="Hennig W."/>
        </authorList>
    </citation>
    <scope>NUCLEOTIDE SEQUENCE [GENOMIC DNA] (HIS3.3A AND HIS3.3B)</scope>
    <source>
        <strain>Tuebingen</strain>
    </source>
</reference>
<proteinExistence type="inferred from homology"/>
<protein>
    <recommendedName>
        <fullName>Histone H3.3</fullName>
    </recommendedName>
    <alternativeName>
        <fullName>H3.A/B</fullName>
    </alternativeName>
</protein>
<comment type="function">
    <text>Variant histone H3 which replaces conventional H3 in a wide range of nucleosomes in active genes and is specifically enriched in modifications associated with active chromatin. Constitutes the predominant form of histone H3 in non-dividing cells and is incorporated into chromatin independently of DNA synthesis. Deposited at sites of nucleosomal displacement throughout transcribed genes, suggesting that it represents an epigenetic imprint of transcriptionally active chromatin. Nucleosomes wrap and compact DNA into chromatin, limiting DNA accessibility to the cellular machineries which require DNA as a template. Histones thereby play a central role in transcription regulation, DNA repair, DNA replication and chromosomal stability. DNA accessibility is regulated via a complex set of post-translational modifications of histones, also called histone code, and nucleosome remodeling.</text>
</comment>
<comment type="subunit">
    <text>The nucleosome is a histone octamer containing two molecules each of H2A, H2B, H3 and H4 assembled in one H3-H4 heterotetramer and two H2A-H2B heterodimers. The octamer wraps approximately 147 bp of DNA.</text>
</comment>
<comment type="subcellular location">
    <subcellularLocation>
        <location evidence="1">Nucleus</location>
    </subcellularLocation>
    <subcellularLocation>
        <location evidence="1">Chromosome</location>
    </subcellularLocation>
</comment>
<comment type="PTM">
    <text evidence="1">Phosphorylation at Ser-11 by aurB/ial or JIL-1 is crucial for chromosome condensation and cell-cycle progression during mitosis and meiosis. Phosphorylation at Ser-11 is enriched on male X chromosome compared to the autosome (By similarity).</text>
</comment>
<comment type="PTM">
    <text evidence="1">Acetylation is generally linked to gene activation. Acetylated on Lys-15 during prophase I of meiosis. Phosphorylation of H2A 'Thr-119' is a prerequisite for H3 Lys-15 acetylation. Acetylation on Lys-15 is enriched on male X chromosome compared to the autosome (By similarity).</text>
</comment>
<comment type="PTM">
    <text evidence="1">Methylation at Lys-5 or Lys-80 is generally associated with active chromatin. Methylation at Lys-80 by gpp occurs at low levels in specific developmental stages and tissues undergoing active cell division, and at highest levels in epidermal cells undergoing differentiation (By similarity).</text>
</comment>
<comment type="miscellaneous">
    <text>This histone is the predominant form in non-dividing cells.</text>
</comment>
<comment type="similarity">
    <text evidence="3">Belongs to the histone H3 family.</text>
</comment>
<sequence>MARTKQTARKSTGGKAPRKQLATKAARKSAPSTGGVKKPHRYRPGTVALREIRRYQKSTELLIRKLPFQRLVREIAQDFKTDLRFQSAAIGALQEASEAYLVGLFEDTNLCAIHAKRVTIMPKDIQLARRIRGERA</sequence>
<name>H33_DROHY</name>
<accession>P84250</accession>
<accession>P06351</accession>
<accession>P33155</accession>
<accession>Q9V3W4</accession>
<dbReference type="EMBL" id="X81206">
    <property type="protein sequence ID" value="CAA57078.1"/>
    <property type="molecule type" value="Genomic_DNA"/>
</dbReference>
<dbReference type="EMBL" id="X81208">
    <property type="protein sequence ID" value="CAA57081.1"/>
    <property type="molecule type" value="Genomic_DNA"/>
</dbReference>
<dbReference type="PIR" id="S61218">
    <property type="entry name" value="S61218"/>
</dbReference>
<dbReference type="SMR" id="P84250"/>
<dbReference type="EnsemblMetazoa" id="XM_023315021.2">
    <property type="protein sequence ID" value="XP_023170789.1"/>
    <property type="gene ID" value="LOC111599384"/>
</dbReference>
<dbReference type="EnsemblMetazoa" id="XM_023316157.2">
    <property type="protein sequence ID" value="XP_023171925.1"/>
    <property type="gene ID" value="LOC111600166"/>
</dbReference>
<dbReference type="OMA" id="HIFAEMA"/>
<dbReference type="OrthoDB" id="7942823at2759"/>
<dbReference type="Proteomes" id="UP000504633">
    <property type="component" value="Unplaced"/>
</dbReference>
<dbReference type="GO" id="GO:0000786">
    <property type="term" value="C:nucleosome"/>
    <property type="evidence" value="ECO:0007669"/>
    <property type="project" value="UniProtKB-KW"/>
</dbReference>
<dbReference type="GO" id="GO:0005634">
    <property type="term" value="C:nucleus"/>
    <property type="evidence" value="ECO:0007669"/>
    <property type="project" value="UniProtKB-SubCell"/>
</dbReference>
<dbReference type="GO" id="GO:0003677">
    <property type="term" value="F:DNA binding"/>
    <property type="evidence" value="ECO:0007669"/>
    <property type="project" value="UniProtKB-KW"/>
</dbReference>
<dbReference type="GO" id="GO:0046982">
    <property type="term" value="F:protein heterodimerization activity"/>
    <property type="evidence" value="ECO:0007669"/>
    <property type="project" value="InterPro"/>
</dbReference>
<dbReference type="GO" id="GO:0030527">
    <property type="term" value="F:structural constituent of chromatin"/>
    <property type="evidence" value="ECO:0007669"/>
    <property type="project" value="InterPro"/>
</dbReference>
<dbReference type="CDD" id="cd22911">
    <property type="entry name" value="HFD_H3"/>
    <property type="match status" value="1"/>
</dbReference>
<dbReference type="FunFam" id="1.10.20.10:FF:000078">
    <property type="entry name" value="Histone H3"/>
    <property type="match status" value="1"/>
</dbReference>
<dbReference type="FunFam" id="1.10.20.10:FF:000044">
    <property type="entry name" value="Histone H3.3"/>
    <property type="match status" value="1"/>
</dbReference>
<dbReference type="Gene3D" id="1.10.20.10">
    <property type="entry name" value="Histone, subunit A"/>
    <property type="match status" value="1"/>
</dbReference>
<dbReference type="InterPro" id="IPR009072">
    <property type="entry name" value="Histone-fold"/>
</dbReference>
<dbReference type="InterPro" id="IPR007125">
    <property type="entry name" value="Histone_H2A/H2B/H3"/>
</dbReference>
<dbReference type="InterPro" id="IPR000164">
    <property type="entry name" value="Histone_H3/CENP-A"/>
</dbReference>
<dbReference type="PANTHER" id="PTHR11426">
    <property type="entry name" value="HISTONE H3"/>
    <property type="match status" value="1"/>
</dbReference>
<dbReference type="Pfam" id="PF00125">
    <property type="entry name" value="Histone"/>
    <property type="match status" value="1"/>
</dbReference>
<dbReference type="PRINTS" id="PR00622">
    <property type="entry name" value="HISTONEH3"/>
</dbReference>
<dbReference type="SMART" id="SM00428">
    <property type="entry name" value="H3"/>
    <property type="match status" value="1"/>
</dbReference>
<dbReference type="SUPFAM" id="SSF47113">
    <property type="entry name" value="Histone-fold"/>
    <property type="match status" value="1"/>
</dbReference>
<dbReference type="PROSITE" id="PS00322">
    <property type="entry name" value="HISTONE_H3_1"/>
    <property type="match status" value="1"/>
</dbReference>
<dbReference type="PROSITE" id="PS00959">
    <property type="entry name" value="HISTONE_H3_2"/>
    <property type="match status" value="1"/>
</dbReference>
<gene>
    <name type="primary">His3.3A</name>
</gene>
<gene>
    <name type="primary">His3.3B</name>
</gene>
<evidence type="ECO:0000250" key="1"/>
<evidence type="ECO:0000256" key="2">
    <source>
        <dbReference type="SAM" id="MobiDB-lite"/>
    </source>
</evidence>
<evidence type="ECO:0000305" key="3"/>